<gene>
    <name evidence="1" type="primary">rpsR1</name>
    <name type="ordered locus">MUL_0073</name>
</gene>
<comment type="function">
    <text evidence="1">Binds as a heterodimer with protein bS6 to the central domain of the 16S rRNA, where it helps stabilize the platform of the 30S subunit.</text>
</comment>
<comment type="subunit">
    <text evidence="1">Part of the 30S ribosomal subunit. Forms a tight heterodimer with protein bS6.</text>
</comment>
<comment type="similarity">
    <text evidence="1">Belongs to the bacterial ribosomal protein bS18 family.</text>
</comment>
<sequence>MAKSNKRRPAPEKPVKTRKCVFCAKKDQAIDYKDTALLRTYISERGKIRARRVTGNCVQHQRDIALAVKNAREVALLPFTSSAR</sequence>
<keyword id="KW-0687">Ribonucleoprotein</keyword>
<keyword id="KW-0689">Ribosomal protein</keyword>
<keyword id="KW-0694">RNA-binding</keyword>
<keyword id="KW-0699">rRNA-binding</keyword>
<proteinExistence type="inferred from homology"/>
<organism>
    <name type="scientific">Mycobacterium ulcerans (strain Agy99)</name>
    <dbReference type="NCBI Taxonomy" id="362242"/>
    <lineage>
        <taxon>Bacteria</taxon>
        <taxon>Bacillati</taxon>
        <taxon>Actinomycetota</taxon>
        <taxon>Actinomycetes</taxon>
        <taxon>Mycobacteriales</taxon>
        <taxon>Mycobacteriaceae</taxon>
        <taxon>Mycobacterium</taxon>
        <taxon>Mycobacterium ulcerans group</taxon>
    </lineage>
</organism>
<protein>
    <recommendedName>
        <fullName evidence="1">Small ribosomal subunit protein bS18A</fullName>
    </recommendedName>
    <alternativeName>
        <fullName evidence="2">30S ribosomal protein S18 1</fullName>
    </alternativeName>
</protein>
<evidence type="ECO:0000255" key="1">
    <source>
        <dbReference type="HAMAP-Rule" id="MF_00270"/>
    </source>
</evidence>
<evidence type="ECO:0000305" key="2"/>
<accession>A0PKH7</accession>
<name>RS181_MYCUA</name>
<reference key="1">
    <citation type="journal article" date="2007" name="Genome Res.">
        <title>Reductive evolution and niche adaptation inferred from the genome of Mycobacterium ulcerans, the causative agent of Buruli ulcer.</title>
        <authorList>
            <person name="Stinear T.P."/>
            <person name="Seemann T."/>
            <person name="Pidot S."/>
            <person name="Frigui W."/>
            <person name="Reysset G."/>
            <person name="Garnier T."/>
            <person name="Meurice G."/>
            <person name="Simon D."/>
            <person name="Bouchier C."/>
            <person name="Ma L."/>
            <person name="Tichit M."/>
            <person name="Porter J.L."/>
            <person name="Ryan J."/>
            <person name="Johnson P.D.R."/>
            <person name="Davies J.K."/>
            <person name="Jenkin G.A."/>
            <person name="Small P.L.C."/>
            <person name="Jones L.M."/>
            <person name="Tekaia F."/>
            <person name="Laval F."/>
            <person name="Daffe M."/>
            <person name="Parkhill J."/>
            <person name="Cole S.T."/>
        </authorList>
    </citation>
    <scope>NUCLEOTIDE SEQUENCE [LARGE SCALE GENOMIC DNA]</scope>
    <source>
        <strain>Agy99</strain>
    </source>
</reference>
<feature type="chain" id="PRO_0000345508" description="Small ribosomal subunit protein bS18A">
    <location>
        <begin position="1"/>
        <end position="84"/>
    </location>
</feature>
<dbReference type="EMBL" id="CP000325">
    <property type="protein sequence ID" value="ABL02846.1"/>
    <property type="molecule type" value="Genomic_DNA"/>
</dbReference>
<dbReference type="SMR" id="A0PKH7"/>
<dbReference type="KEGG" id="mul:MUL_0073"/>
<dbReference type="eggNOG" id="COG0238">
    <property type="taxonomic scope" value="Bacteria"/>
</dbReference>
<dbReference type="HOGENOM" id="CLU_148710_2_2_11"/>
<dbReference type="Proteomes" id="UP000000765">
    <property type="component" value="Chromosome"/>
</dbReference>
<dbReference type="GO" id="GO:0022627">
    <property type="term" value="C:cytosolic small ribosomal subunit"/>
    <property type="evidence" value="ECO:0007669"/>
    <property type="project" value="TreeGrafter"/>
</dbReference>
<dbReference type="GO" id="GO:0070181">
    <property type="term" value="F:small ribosomal subunit rRNA binding"/>
    <property type="evidence" value="ECO:0007669"/>
    <property type="project" value="TreeGrafter"/>
</dbReference>
<dbReference type="GO" id="GO:0003735">
    <property type="term" value="F:structural constituent of ribosome"/>
    <property type="evidence" value="ECO:0007669"/>
    <property type="project" value="InterPro"/>
</dbReference>
<dbReference type="GO" id="GO:0006412">
    <property type="term" value="P:translation"/>
    <property type="evidence" value="ECO:0007669"/>
    <property type="project" value="UniProtKB-UniRule"/>
</dbReference>
<dbReference type="FunFam" id="4.10.640.10:FF:000004">
    <property type="entry name" value="30S ribosomal protein S18"/>
    <property type="match status" value="1"/>
</dbReference>
<dbReference type="Gene3D" id="4.10.640.10">
    <property type="entry name" value="Ribosomal protein S18"/>
    <property type="match status" value="1"/>
</dbReference>
<dbReference type="HAMAP" id="MF_00270">
    <property type="entry name" value="Ribosomal_bS18"/>
    <property type="match status" value="1"/>
</dbReference>
<dbReference type="InterPro" id="IPR001648">
    <property type="entry name" value="Ribosomal_bS18"/>
</dbReference>
<dbReference type="InterPro" id="IPR018275">
    <property type="entry name" value="Ribosomal_bS18_CS"/>
</dbReference>
<dbReference type="InterPro" id="IPR036870">
    <property type="entry name" value="Ribosomal_bS18_sf"/>
</dbReference>
<dbReference type="NCBIfam" id="TIGR00165">
    <property type="entry name" value="S18"/>
    <property type="match status" value="1"/>
</dbReference>
<dbReference type="PANTHER" id="PTHR13479">
    <property type="entry name" value="30S RIBOSOMAL PROTEIN S18"/>
    <property type="match status" value="1"/>
</dbReference>
<dbReference type="PANTHER" id="PTHR13479:SF62">
    <property type="entry name" value="SMALL RIBOSOMAL SUBUNIT PROTEIN BS18A"/>
    <property type="match status" value="1"/>
</dbReference>
<dbReference type="Pfam" id="PF01084">
    <property type="entry name" value="Ribosomal_S18"/>
    <property type="match status" value="1"/>
</dbReference>
<dbReference type="PRINTS" id="PR00974">
    <property type="entry name" value="RIBOSOMALS18"/>
</dbReference>
<dbReference type="SUPFAM" id="SSF46911">
    <property type="entry name" value="Ribosomal protein S18"/>
    <property type="match status" value="1"/>
</dbReference>
<dbReference type="PROSITE" id="PS00057">
    <property type="entry name" value="RIBOSOMAL_S18"/>
    <property type="match status" value="1"/>
</dbReference>